<protein>
    <recommendedName>
        <fullName evidence="1">1-(5-phosphoribosyl)-5-[(5-phosphoribosylamino)methylideneamino] imidazole-4-carboxamide isomerase</fullName>
        <ecNumber evidence="1">5.3.1.16</ecNumber>
    </recommendedName>
    <alternativeName>
        <fullName evidence="1">Phosphoribosylformimino-5-aminoimidazole carboxamide ribotide isomerase</fullName>
    </alternativeName>
</protein>
<accession>A9M2Q6</accession>
<keyword id="KW-0028">Amino-acid biosynthesis</keyword>
<keyword id="KW-0963">Cytoplasm</keyword>
<keyword id="KW-0368">Histidine biosynthesis</keyword>
<keyword id="KW-0413">Isomerase</keyword>
<organism>
    <name type="scientific">Neisseria meningitidis serogroup C (strain 053442)</name>
    <dbReference type="NCBI Taxonomy" id="374833"/>
    <lineage>
        <taxon>Bacteria</taxon>
        <taxon>Pseudomonadati</taxon>
        <taxon>Pseudomonadota</taxon>
        <taxon>Betaproteobacteria</taxon>
        <taxon>Neisseriales</taxon>
        <taxon>Neisseriaceae</taxon>
        <taxon>Neisseria</taxon>
    </lineage>
</organism>
<feature type="chain" id="PRO_1000084101" description="1-(5-phosphoribosyl)-5-[(5-phosphoribosylamino)methylideneamino] imidazole-4-carboxamide isomerase">
    <location>
        <begin position="1"/>
        <end position="245"/>
    </location>
</feature>
<feature type="active site" description="Proton acceptor" evidence="1">
    <location>
        <position position="8"/>
    </location>
</feature>
<feature type="active site" description="Proton donor" evidence="1">
    <location>
        <position position="131"/>
    </location>
</feature>
<name>HIS4_NEIM0</name>
<sequence length="245" mass="25906">MLLIPAIDLKEGRCVRLRQGLMEEATVFSDSPAETALHWFKQGARRLHLVDLNGAFAGVPQNLPAIKDILAAVAKDIPVQLGGGIRDLKTIGQYLDLGLNDVIIGTAAVKNPDFVREACKAFPGRIIVGLDAKDGMAAIDGWATVTGHHVIDLAKRFEDDGVNSIIYTDIGRDGMMSGVNIDATVKLAQAVRIPVIASGGLTGLDDIRALCAAEKHGVAGAITGRAIYEGSIDFAQAQQLADSLD</sequence>
<dbReference type="EC" id="5.3.1.16" evidence="1"/>
<dbReference type="EMBL" id="CP000381">
    <property type="protein sequence ID" value="ABX72775.1"/>
    <property type="molecule type" value="Genomic_DNA"/>
</dbReference>
<dbReference type="RefSeq" id="WP_002222826.1">
    <property type="nucleotide sequence ID" value="NC_010120.1"/>
</dbReference>
<dbReference type="SMR" id="A9M2Q6"/>
<dbReference type="GeneID" id="93386537"/>
<dbReference type="KEGG" id="nmn:NMCC_0577"/>
<dbReference type="HOGENOM" id="CLU_048577_1_1_4"/>
<dbReference type="UniPathway" id="UPA00031">
    <property type="reaction ID" value="UER00009"/>
</dbReference>
<dbReference type="Proteomes" id="UP000001177">
    <property type="component" value="Chromosome"/>
</dbReference>
<dbReference type="GO" id="GO:0005737">
    <property type="term" value="C:cytoplasm"/>
    <property type="evidence" value="ECO:0007669"/>
    <property type="project" value="UniProtKB-SubCell"/>
</dbReference>
<dbReference type="GO" id="GO:0003949">
    <property type="term" value="F:1-(5-phosphoribosyl)-5-[(5-phosphoribosylamino)methylideneamino]imidazole-4-carboxamide isomerase activity"/>
    <property type="evidence" value="ECO:0007669"/>
    <property type="project" value="UniProtKB-UniRule"/>
</dbReference>
<dbReference type="GO" id="GO:0000105">
    <property type="term" value="P:L-histidine biosynthetic process"/>
    <property type="evidence" value="ECO:0007669"/>
    <property type="project" value="UniProtKB-UniRule"/>
</dbReference>
<dbReference type="GO" id="GO:0000162">
    <property type="term" value="P:L-tryptophan biosynthetic process"/>
    <property type="evidence" value="ECO:0007669"/>
    <property type="project" value="TreeGrafter"/>
</dbReference>
<dbReference type="CDD" id="cd04732">
    <property type="entry name" value="HisA"/>
    <property type="match status" value="1"/>
</dbReference>
<dbReference type="FunFam" id="3.20.20.70:FF:000009">
    <property type="entry name" value="1-(5-phosphoribosyl)-5-[(5-phosphoribosylamino)methylideneamino] imidazole-4-carboxamide isomerase"/>
    <property type="match status" value="1"/>
</dbReference>
<dbReference type="Gene3D" id="3.20.20.70">
    <property type="entry name" value="Aldolase class I"/>
    <property type="match status" value="1"/>
</dbReference>
<dbReference type="HAMAP" id="MF_01014">
    <property type="entry name" value="HisA"/>
    <property type="match status" value="1"/>
</dbReference>
<dbReference type="InterPro" id="IPR013785">
    <property type="entry name" value="Aldolase_TIM"/>
</dbReference>
<dbReference type="InterPro" id="IPR006062">
    <property type="entry name" value="His_biosynth"/>
</dbReference>
<dbReference type="InterPro" id="IPR006063">
    <property type="entry name" value="HisA_bact_arch"/>
</dbReference>
<dbReference type="InterPro" id="IPR044524">
    <property type="entry name" value="Isoase_HisA-like"/>
</dbReference>
<dbReference type="InterPro" id="IPR023016">
    <property type="entry name" value="Isoase_HisA-like_bact"/>
</dbReference>
<dbReference type="InterPro" id="IPR011060">
    <property type="entry name" value="RibuloseP-bd_barrel"/>
</dbReference>
<dbReference type="NCBIfam" id="TIGR00007">
    <property type="entry name" value="1-(5-phosphoribosyl)-5-[(5-phosphoribosylamino)methylideneamino]imidazole-4-carboxamide isomerase"/>
    <property type="match status" value="1"/>
</dbReference>
<dbReference type="NCBIfam" id="NF010112">
    <property type="entry name" value="PRK13585.1"/>
    <property type="match status" value="1"/>
</dbReference>
<dbReference type="PANTHER" id="PTHR43090">
    <property type="entry name" value="1-(5-PHOSPHORIBOSYL)-5-[(5-PHOSPHORIBOSYLAMINO)METHYLIDENEAMINO] IMIDAZOLE-4-CARBOXAMIDE ISOMERASE"/>
    <property type="match status" value="1"/>
</dbReference>
<dbReference type="PANTHER" id="PTHR43090:SF2">
    <property type="entry name" value="1-(5-PHOSPHORIBOSYL)-5-[(5-PHOSPHORIBOSYLAMINO)METHYLIDENEAMINO] IMIDAZOLE-4-CARBOXAMIDE ISOMERASE"/>
    <property type="match status" value="1"/>
</dbReference>
<dbReference type="Pfam" id="PF00977">
    <property type="entry name" value="His_biosynth"/>
    <property type="match status" value="1"/>
</dbReference>
<dbReference type="SUPFAM" id="SSF51366">
    <property type="entry name" value="Ribulose-phoshate binding barrel"/>
    <property type="match status" value="1"/>
</dbReference>
<gene>
    <name evidence="1" type="primary">hisA</name>
    <name type="ordered locus">NMCC_0577</name>
</gene>
<evidence type="ECO:0000255" key="1">
    <source>
        <dbReference type="HAMAP-Rule" id="MF_01014"/>
    </source>
</evidence>
<comment type="catalytic activity">
    <reaction evidence="1">
        <text>1-(5-phospho-beta-D-ribosyl)-5-[(5-phospho-beta-D-ribosylamino)methylideneamino]imidazole-4-carboxamide = 5-[(5-phospho-1-deoxy-D-ribulos-1-ylimino)methylamino]-1-(5-phospho-beta-D-ribosyl)imidazole-4-carboxamide</text>
        <dbReference type="Rhea" id="RHEA:15469"/>
        <dbReference type="ChEBI" id="CHEBI:58435"/>
        <dbReference type="ChEBI" id="CHEBI:58525"/>
        <dbReference type="EC" id="5.3.1.16"/>
    </reaction>
</comment>
<comment type="pathway">
    <text evidence="1">Amino-acid biosynthesis; L-histidine biosynthesis; L-histidine from 5-phospho-alpha-D-ribose 1-diphosphate: step 4/9.</text>
</comment>
<comment type="subcellular location">
    <subcellularLocation>
        <location evidence="1">Cytoplasm</location>
    </subcellularLocation>
</comment>
<comment type="similarity">
    <text evidence="1">Belongs to the HisA/HisF family.</text>
</comment>
<proteinExistence type="inferred from homology"/>
<reference key="1">
    <citation type="journal article" date="2008" name="Genomics">
        <title>Characterization of ST-4821 complex, a unique Neisseria meningitidis clone.</title>
        <authorList>
            <person name="Peng J."/>
            <person name="Yang L."/>
            <person name="Yang F."/>
            <person name="Yang J."/>
            <person name="Yan Y."/>
            <person name="Nie H."/>
            <person name="Zhang X."/>
            <person name="Xiong Z."/>
            <person name="Jiang Y."/>
            <person name="Cheng F."/>
            <person name="Xu X."/>
            <person name="Chen S."/>
            <person name="Sun L."/>
            <person name="Li W."/>
            <person name="Shen Y."/>
            <person name="Shao Z."/>
            <person name="Liang X."/>
            <person name="Xu J."/>
            <person name="Jin Q."/>
        </authorList>
    </citation>
    <scope>NUCLEOTIDE SEQUENCE [LARGE SCALE GENOMIC DNA]</scope>
    <source>
        <strain>053442</strain>
    </source>
</reference>